<feature type="chain" id="PRO_0000371335" description="PI-PLC X domain-containing protein DDB_G0269228">
    <location>
        <begin position="1"/>
        <end position="574"/>
    </location>
</feature>
<feature type="domain" description="PI-PLC X-box" evidence="1">
    <location>
        <begin position="270"/>
        <end position="449"/>
    </location>
</feature>
<feature type="region of interest" description="Disordered" evidence="2">
    <location>
        <begin position="1"/>
        <end position="42"/>
    </location>
</feature>
<feature type="compositionally biased region" description="Low complexity" evidence="2">
    <location>
        <begin position="21"/>
        <end position="34"/>
    </location>
</feature>
<feature type="sequence conflict" description="In Ref. 1; AAD09227." evidence="3" ref="1">
    <original>L</original>
    <variation>V</variation>
    <location>
        <position position="158"/>
    </location>
</feature>
<proteinExistence type="evidence at transcript level"/>
<organism>
    <name type="scientific">Dictyostelium discoideum</name>
    <name type="common">Social amoeba</name>
    <dbReference type="NCBI Taxonomy" id="44689"/>
    <lineage>
        <taxon>Eukaryota</taxon>
        <taxon>Amoebozoa</taxon>
        <taxon>Evosea</taxon>
        <taxon>Eumycetozoa</taxon>
        <taxon>Dictyostelia</taxon>
        <taxon>Dictyosteliales</taxon>
        <taxon>Dictyosteliaceae</taxon>
        <taxon>Dictyostelium</taxon>
    </lineage>
</organism>
<protein>
    <recommendedName>
        <fullName>PI-PLC X domain-containing protein DDB_G0269228</fullName>
    </recommendedName>
</protein>
<name>Y1320_DICDI</name>
<gene>
    <name type="ORF">DDB_G0269228</name>
</gene>
<keyword id="KW-1185">Reference proteome</keyword>
<sequence length="574" mass="68306">MFSSIMFKKKPKQNLNENEITSQSTTTTSTLSDSKPSEKKIKDNKNDKFKINENDTIVEIEWESDIQQKYDLIALYDNDTNVIDDYIWHWKINDEYTYNNNNTNIIRDPNKNYYIKYWRIDDNNNGINHHHHYNHHHHINNHHHNHIKTNHHSLPPNLHLSPLHNNNHHRHHSHQFPKVSINNVYKQIHNYKLKNHFIRQQFQNNSTTNQDTIKIKLSHFEERNLLKSVDYSGEMFKQYSNWMTNNWERIKDKMVRDLVLPGSHDAATYGIKSSSLRVPGDKVPSFIPNSIVSKWSKTQSGNIFKQLTMGYRYFDLRVAPYPVTGKLYIYHAMFSVPVSEVLDDIVKFIKNTNYYQQPNSSNNNDEKQQLQQQQQLFKKEIILLHWNHLGYLSIEQHQELQLMIKSKLDGMLANRQLGNNVKVRELEFTPIINIYDDNGLKKRIINDDGKKSKQPFDSIQNEPLFWYSNKSLVSNYDSNQFHTSKDVISFLSREVTYNHKDRFWVAQCILTIDSKKLLHITTNSLLDWNHSEFPKFLKFFENLEEKKVPTNIIMTDFCTHYPITDYAIRRNINE</sequence>
<evidence type="ECO:0000255" key="1">
    <source>
        <dbReference type="PROSITE-ProRule" id="PRU00270"/>
    </source>
</evidence>
<evidence type="ECO:0000256" key="2">
    <source>
        <dbReference type="SAM" id="MobiDB-lite"/>
    </source>
</evidence>
<evidence type="ECO:0000305" key="3"/>
<reference key="1">
    <citation type="submission" date="1996-12" db="EMBL/GenBank/DDBJ databases">
        <authorList>
            <person name="Becker M."/>
        </authorList>
    </citation>
    <scope>NUCLEOTIDE SEQUENCE [MRNA]</scope>
    <source>
        <strain>AX2</strain>
    </source>
</reference>
<reference key="2">
    <citation type="journal article" date="2005" name="Nature">
        <title>The genome of the social amoeba Dictyostelium discoideum.</title>
        <authorList>
            <person name="Eichinger L."/>
            <person name="Pachebat J.A."/>
            <person name="Gloeckner G."/>
            <person name="Rajandream M.A."/>
            <person name="Sucgang R."/>
            <person name="Berriman M."/>
            <person name="Song J."/>
            <person name="Olsen R."/>
            <person name="Szafranski K."/>
            <person name="Xu Q."/>
            <person name="Tunggal B."/>
            <person name="Kummerfeld S."/>
            <person name="Madera M."/>
            <person name="Konfortov B.A."/>
            <person name="Rivero F."/>
            <person name="Bankier A.T."/>
            <person name="Lehmann R."/>
            <person name="Hamlin N."/>
            <person name="Davies R."/>
            <person name="Gaudet P."/>
            <person name="Fey P."/>
            <person name="Pilcher K."/>
            <person name="Chen G."/>
            <person name="Saunders D."/>
            <person name="Sodergren E.J."/>
            <person name="Davis P."/>
            <person name="Kerhornou A."/>
            <person name="Nie X."/>
            <person name="Hall N."/>
            <person name="Anjard C."/>
            <person name="Hemphill L."/>
            <person name="Bason N."/>
            <person name="Farbrother P."/>
            <person name="Desany B."/>
            <person name="Just E."/>
            <person name="Morio T."/>
            <person name="Rost R."/>
            <person name="Churcher C.M."/>
            <person name="Cooper J."/>
            <person name="Haydock S."/>
            <person name="van Driessche N."/>
            <person name="Cronin A."/>
            <person name="Goodhead I."/>
            <person name="Muzny D.M."/>
            <person name="Mourier T."/>
            <person name="Pain A."/>
            <person name="Lu M."/>
            <person name="Harper D."/>
            <person name="Lindsay R."/>
            <person name="Hauser H."/>
            <person name="James K.D."/>
            <person name="Quiles M."/>
            <person name="Madan Babu M."/>
            <person name="Saito T."/>
            <person name="Buchrieser C."/>
            <person name="Wardroper A."/>
            <person name="Felder M."/>
            <person name="Thangavelu M."/>
            <person name="Johnson D."/>
            <person name="Knights A."/>
            <person name="Loulseged H."/>
            <person name="Mungall K.L."/>
            <person name="Oliver K."/>
            <person name="Price C."/>
            <person name="Quail M.A."/>
            <person name="Urushihara H."/>
            <person name="Hernandez J."/>
            <person name="Rabbinowitsch E."/>
            <person name="Steffen D."/>
            <person name="Sanders M."/>
            <person name="Ma J."/>
            <person name="Kohara Y."/>
            <person name="Sharp S."/>
            <person name="Simmonds M.N."/>
            <person name="Spiegler S."/>
            <person name="Tivey A."/>
            <person name="Sugano S."/>
            <person name="White B."/>
            <person name="Walker D."/>
            <person name="Woodward J.R."/>
            <person name="Winckler T."/>
            <person name="Tanaka Y."/>
            <person name="Shaulsky G."/>
            <person name="Schleicher M."/>
            <person name="Weinstock G.M."/>
            <person name="Rosenthal A."/>
            <person name="Cox E.C."/>
            <person name="Chisholm R.L."/>
            <person name="Gibbs R.A."/>
            <person name="Loomis W.F."/>
            <person name="Platzer M."/>
            <person name="Kay R.R."/>
            <person name="Williams J.G."/>
            <person name="Dear P.H."/>
            <person name="Noegel A.A."/>
            <person name="Barrell B.G."/>
            <person name="Kuspa A."/>
        </authorList>
    </citation>
    <scope>NUCLEOTIDE SEQUENCE [LARGE SCALE GENOMIC DNA]</scope>
    <source>
        <strain>AX4</strain>
    </source>
</reference>
<dbReference type="EMBL" id="U80927">
    <property type="protein sequence ID" value="AAD09227.1"/>
    <property type="molecule type" value="Genomic_DNA"/>
</dbReference>
<dbReference type="EMBL" id="AAFI02000005">
    <property type="protein sequence ID" value="EAL71964.1"/>
    <property type="molecule type" value="Genomic_DNA"/>
</dbReference>
<dbReference type="RefSeq" id="XP_646161.1">
    <property type="nucleotide sequence ID" value="XM_641069.1"/>
</dbReference>
<dbReference type="FunCoup" id="Q55DH0">
    <property type="interactions" value="1"/>
</dbReference>
<dbReference type="PaxDb" id="44689-DDB0191320"/>
<dbReference type="EnsemblProtists" id="EAL71964">
    <property type="protein sequence ID" value="EAL71964"/>
    <property type="gene ID" value="DDB_G0269228"/>
</dbReference>
<dbReference type="GeneID" id="8617113"/>
<dbReference type="KEGG" id="ddi:DDB_G0269228"/>
<dbReference type="dictyBase" id="DDB_G0269228"/>
<dbReference type="VEuPathDB" id="AmoebaDB:DDB_G0269228"/>
<dbReference type="eggNOG" id="KOG4306">
    <property type="taxonomic scope" value="Eukaryota"/>
</dbReference>
<dbReference type="HOGENOM" id="CLU_475242_0_0_1"/>
<dbReference type="InParanoid" id="Q55DH0"/>
<dbReference type="PhylomeDB" id="Q55DH0"/>
<dbReference type="PRO" id="PR:Q55DH0"/>
<dbReference type="Proteomes" id="UP000002195">
    <property type="component" value="Chromosome 1"/>
</dbReference>
<dbReference type="GO" id="GO:0008081">
    <property type="term" value="F:phosphoric diester hydrolase activity"/>
    <property type="evidence" value="ECO:0000318"/>
    <property type="project" value="GO_Central"/>
</dbReference>
<dbReference type="GO" id="GO:0006629">
    <property type="term" value="P:lipid metabolic process"/>
    <property type="evidence" value="ECO:0007669"/>
    <property type="project" value="InterPro"/>
</dbReference>
<dbReference type="Gene3D" id="3.20.20.190">
    <property type="entry name" value="Phosphatidylinositol (PI) phosphodiesterase"/>
    <property type="match status" value="1"/>
</dbReference>
<dbReference type="InterPro" id="IPR051057">
    <property type="entry name" value="PI-PLC_domain"/>
</dbReference>
<dbReference type="InterPro" id="IPR017946">
    <property type="entry name" value="PLC-like_Pdiesterase_TIM-brl"/>
</dbReference>
<dbReference type="PANTHER" id="PTHR13593">
    <property type="match status" value="1"/>
</dbReference>
<dbReference type="PANTHER" id="PTHR13593:SF113">
    <property type="entry name" value="SI:DKEY-266F7.9"/>
    <property type="match status" value="1"/>
</dbReference>
<dbReference type="SUPFAM" id="SSF51695">
    <property type="entry name" value="PLC-like phosphodiesterases"/>
    <property type="match status" value="1"/>
</dbReference>
<dbReference type="PROSITE" id="PS50007">
    <property type="entry name" value="PIPLC_X_DOMAIN"/>
    <property type="match status" value="1"/>
</dbReference>
<accession>Q55DH0</accession>
<accession>O96901</accession>